<sequence>MGGQKTHFGFSTVNEDEKAGKVAEVFHSVAKNYDIMNDVMSAGLHRVWKHFTINTAHLKKGDKVLDIAGGTGDLSRGWAKRVGKEGEVWLTDINSSMLTVGRDRLLNEGMILPVSLADAEKLPFPDNYFNLVSVAFGLRNMTHKDAALKEMYRVLKPGGTLLVLEFSKIYKPLEGAYDFYSFKLLPAMGRLIAKDAESYQYLAESIRMHPDQETLKQMMLDAGFDSVDYHNMSAGIVALHKGVKF</sequence>
<keyword id="KW-0474">Menaquinone biosynthesis</keyword>
<keyword id="KW-0489">Methyltransferase</keyword>
<keyword id="KW-0949">S-adenosyl-L-methionine</keyword>
<keyword id="KW-0808">Transferase</keyword>
<keyword id="KW-0831">Ubiquinone biosynthesis</keyword>
<reference key="1">
    <citation type="journal article" date="2000" name="Nature">
        <title>Complete DNA sequence of a serogroup A strain of Neisseria meningitidis Z2491.</title>
        <authorList>
            <person name="Parkhill J."/>
            <person name="Achtman M."/>
            <person name="James K.D."/>
            <person name="Bentley S.D."/>
            <person name="Churcher C.M."/>
            <person name="Klee S.R."/>
            <person name="Morelli G."/>
            <person name="Basham D."/>
            <person name="Brown D."/>
            <person name="Chillingworth T."/>
            <person name="Davies R.M."/>
            <person name="Davis P."/>
            <person name="Devlin K."/>
            <person name="Feltwell T."/>
            <person name="Hamlin N."/>
            <person name="Holroyd S."/>
            <person name="Jagels K."/>
            <person name="Leather S."/>
            <person name="Moule S."/>
            <person name="Mungall K.L."/>
            <person name="Quail M.A."/>
            <person name="Rajandream M.A."/>
            <person name="Rutherford K.M."/>
            <person name="Simmonds M."/>
            <person name="Skelton J."/>
            <person name="Whitehead S."/>
            <person name="Spratt B.G."/>
            <person name="Barrell B.G."/>
        </authorList>
    </citation>
    <scope>NUCLEOTIDE SEQUENCE [LARGE SCALE GENOMIC DNA]</scope>
    <source>
        <strain>DSM 15465 / Z2491</strain>
    </source>
</reference>
<dbReference type="EC" id="2.1.1.163" evidence="1"/>
<dbReference type="EC" id="2.1.1.201" evidence="1"/>
<dbReference type="EMBL" id="AL157959">
    <property type="protein sequence ID" value="CAM08180.1"/>
    <property type="molecule type" value="Genomic_DNA"/>
</dbReference>
<dbReference type="PIR" id="C81942">
    <property type="entry name" value="C81942"/>
</dbReference>
<dbReference type="RefSeq" id="WP_002246084.1">
    <property type="nucleotide sequence ID" value="NC_003116.1"/>
</dbReference>
<dbReference type="SMR" id="Q9JV83"/>
<dbReference type="EnsemblBacteria" id="CAM08180">
    <property type="protein sequence ID" value="CAM08180"/>
    <property type="gene ID" value="NMA0956"/>
</dbReference>
<dbReference type="GeneID" id="93386426"/>
<dbReference type="KEGG" id="nma:NMA0956"/>
<dbReference type="HOGENOM" id="CLU_037990_0_0_4"/>
<dbReference type="UniPathway" id="UPA00079">
    <property type="reaction ID" value="UER00169"/>
</dbReference>
<dbReference type="UniPathway" id="UPA00232"/>
<dbReference type="Proteomes" id="UP000000626">
    <property type="component" value="Chromosome"/>
</dbReference>
<dbReference type="GO" id="GO:0008425">
    <property type="term" value="F:2-methoxy-6-polyprenyl-1,4-benzoquinol methyltransferase activity"/>
    <property type="evidence" value="ECO:0007669"/>
    <property type="project" value="UniProtKB-UniRule"/>
</dbReference>
<dbReference type="GO" id="GO:0043770">
    <property type="term" value="F:demethylmenaquinone methyltransferase activity"/>
    <property type="evidence" value="ECO:0007669"/>
    <property type="project" value="UniProtKB-UniRule"/>
</dbReference>
<dbReference type="GO" id="GO:0009060">
    <property type="term" value="P:aerobic respiration"/>
    <property type="evidence" value="ECO:0007669"/>
    <property type="project" value="UniProtKB-UniRule"/>
</dbReference>
<dbReference type="GO" id="GO:0009234">
    <property type="term" value="P:menaquinone biosynthetic process"/>
    <property type="evidence" value="ECO:0007669"/>
    <property type="project" value="UniProtKB-UniRule"/>
</dbReference>
<dbReference type="GO" id="GO:0032259">
    <property type="term" value="P:methylation"/>
    <property type="evidence" value="ECO:0007669"/>
    <property type="project" value="UniProtKB-KW"/>
</dbReference>
<dbReference type="CDD" id="cd02440">
    <property type="entry name" value="AdoMet_MTases"/>
    <property type="match status" value="1"/>
</dbReference>
<dbReference type="Gene3D" id="3.40.50.150">
    <property type="entry name" value="Vaccinia Virus protein VP39"/>
    <property type="match status" value="1"/>
</dbReference>
<dbReference type="HAMAP" id="MF_01813">
    <property type="entry name" value="MenG_UbiE_methyltr"/>
    <property type="match status" value="1"/>
</dbReference>
<dbReference type="InterPro" id="IPR029063">
    <property type="entry name" value="SAM-dependent_MTases_sf"/>
</dbReference>
<dbReference type="InterPro" id="IPR004033">
    <property type="entry name" value="UbiE/COQ5_MeTrFase"/>
</dbReference>
<dbReference type="InterPro" id="IPR023576">
    <property type="entry name" value="UbiE/COQ5_MeTrFase_CS"/>
</dbReference>
<dbReference type="NCBIfam" id="TIGR01934">
    <property type="entry name" value="MenG_MenH_UbiE"/>
    <property type="match status" value="1"/>
</dbReference>
<dbReference type="NCBIfam" id="NF001240">
    <property type="entry name" value="PRK00216.1-1"/>
    <property type="match status" value="1"/>
</dbReference>
<dbReference type="NCBIfam" id="NF001244">
    <property type="entry name" value="PRK00216.1-5"/>
    <property type="match status" value="1"/>
</dbReference>
<dbReference type="PANTHER" id="PTHR43591:SF24">
    <property type="entry name" value="2-METHOXY-6-POLYPRENYL-1,4-BENZOQUINOL METHYLASE, MITOCHONDRIAL"/>
    <property type="match status" value="1"/>
</dbReference>
<dbReference type="PANTHER" id="PTHR43591">
    <property type="entry name" value="METHYLTRANSFERASE"/>
    <property type="match status" value="1"/>
</dbReference>
<dbReference type="Pfam" id="PF01209">
    <property type="entry name" value="Ubie_methyltran"/>
    <property type="match status" value="1"/>
</dbReference>
<dbReference type="SUPFAM" id="SSF53335">
    <property type="entry name" value="S-adenosyl-L-methionine-dependent methyltransferases"/>
    <property type="match status" value="1"/>
</dbReference>
<dbReference type="PROSITE" id="PS51608">
    <property type="entry name" value="SAM_MT_UBIE"/>
    <property type="match status" value="1"/>
</dbReference>
<dbReference type="PROSITE" id="PS01183">
    <property type="entry name" value="UBIE_1"/>
    <property type="match status" value="1"/>
</dbReference>
<dbReference type="PROSITE" id="PS01184">
    <property type="entry name" value="UBIE_2"/>
    <property type="match status" value="1"/>
</dbReference>
<organism>
    <name type="scientific">Neisseria meningitidis serogroup A / serotype 4A (strain DSM 15465 / Z2491)</name>
    <dbReference type="NCBI Taxonomy" id="122587"/>
    <lineage>
        <taxon>Bacteria</taxon>
        <taxon>Pseudomonadati</taxon>
        <taxon>Pseudomonadota</taxon>
        <taxon>Betaproteobacteria</taxon>
        <taxon>Neisseriales</taxon>
        <taxon>Neisseriaceae</taxon>
        <taxon>Neisseria</taxon>
    </lineage>
</organism>
<gene>
    <name evidence="1" type="primary">ubiE</name>
    <name type="ordered locus">NMA0956</name>
</gene>
<protein>
    <recommendedName>
        <fullName evidence="1">Ubiquinone/menaquinone biosynthesis C-methyltransferase UbiE</fullName>
        <ecNumber evidence="1">2.1.1.163</ecNumber>
        <ecNumber evidence="1">2.1.1.201</ecNumber>
    </recommendedName>
    <alternativeName>
        <fullName evidence="1">2-methoxy-6-polyprenyl-1,4-benzoquinol methylase</fullName>
    </alternativeName>
    <alternativeName>
        <fullName evidence="1">Demethylmenaquinone methyltransferase</fullName>
    </alternativeName>
</protein>
<proteinExistence type="inferred from homology"/>
<comment type="function">
    <text evidence="1">Methyltransferase required for the conversion of demethylmenaquinol (DMKH2) to menaquinol (MKH2) and the conversion of 2-polyprenyl-6-methoxy-1,4-benzoquinol (DDMQH2) to 2-polyprenyl-3-methyl-6-methoxy-1,4-benzoquinol (DMQH2).</text>
</comment>
<comment type="catalytic activity">
    <reaction evidence="1">
        <text>a 2-demethylmenaquinol + S-adenosyl-L-methionine = a menaquinol + S-adenosyl-L-homocysteine + H(+)</text>
        <dbReference type="Rhea" id="RHEA:42640"/>
        <dbReference type="Rhea" id="RHEA-COMP:9539"/>
        <dbReference type="Rhea" id="RHEA-COMP:9563"/>
        <dbReference type="ChEBI" id="CHEBI:15378"/>
        <dbReference type="ChEBI" id="CHEBI:18151"/>
        <dbReference type="ChEBI" id="CHEBI:55437"/>
        <dbReference type="ChEBI" id="CHEBI:57856"/>
        <dbReference type="ChEBI" id="CHEBI:59789"/>
        <dbReference type="EC" id="2.1.1.163"/>
    </reaction>
</comment>
<comment type="catalytic activity">
    <reaction evidence="1">
        <text>a 2-methoxy-6-(all-trans-polyprenyl)benzene-1,4-diol + S-adenosyl-L-methionine = a 5-methoxy-2-methyl-3-(all-trans-polyprenyl)benzene-1,4-diol + S-adenosyl-L-homocysteine + H(+)</text>
        <dbReference type="Rhea" id="RHEA:28286"/>
        <dbReference type="Rhea" id="RHEA-COMP:10858"/>
        <dbReference type="Rhea" id="RHEA-COMP:10859"/>
        <dbReference type="ChEBI" id="CHEBI:15378"/>
        <dbReference type="ChEBI" id="CHEBI:57856"/>
        <dbReference type="ChEBI" id="CHEBI:59789"/>
        <dbReference type="ChEBI" id="CHEBI:84166"/>
        <dbReference type="ChEBI" id="CHEBI:84167"/>
        <dbReference type="EC" id="2.1.1.201"/>
    </reaction>
</comment>
<comment type="pathway">
    <text evidence="1">Quinol/quinone metabolism; menaquinone biosynthesis; menaquinol from 1,4-dihydroxy-2-naphthoate: step 2/2.</text>
</comment>
<comment type="pathway">
    <text evidence="1">Cofactor biosynthesis; ubiquinone biosynthesis.</text>
</comment>
<comment type="similarity">
    <text evidence="1">Belongs to the class I-like SAM-binding methyltransferase superfamily. MenG/UbiE family.</text>
</comment>
<accession>Q9JV83</accession>
<accession>A1IQZ6</accession>
<evidence type="ECO:0000255" key="1">
    <source>
        <dbReference type="HAMAP-Rule" id="MF_01813"/>
    </source>
</evidence>
<feature type="chain" id="PRO_0000193300" description="Ubiquinone/menaquinone biosynthesis C-methyltransferase UbiE">
    <location>
        <begin position="1"/>
        <end position="245"/>
    </location>
</feature>
<feature type="binding site" evidence="1">
    <location>
        <position position="71"/>
    </location>
    <ligand>
        <name>S-adenosyl-L-methionine</name>
        <dbReference type="ChEBI" id="CHEBI:59789"/>
    </ligand>
</feature>
<feature type="binding site" evidence="1">
    <location>
        <position position="92"/>
    </location>
    <ligand>
        <name>S-adenosyl-L-methionine</name>
        <dbReference type="ChEBI" id="CHEBI:59789"/>
    </ligand>
</feature>
<feature type="binding site" evidence="1">
    <location>
        <begin position="118"/>
        <end position="119"/>
    </location>
    <ligand>
        <name>S-adenosyl-L-methionine</name>
        <dbReference type="ChEBI" id="CHEBI:59789"/>
    </ligand>
</feature>
<name>UBIE_NEIMA</name>